<dbReference type="EMBL" id="L77117">
    <property type="protein sequence ID" value="AAB98168.1"/>
    <property type="molecule type" value="Genomic_DNA"/>
</dbReference>
<dbReference type="PIR" id="E64323">
    <property type="entry name" value="E64323"/>
</dbReference>
<dbReference type="RefSeq" id="WP_010869683.1">
    <property type="nucleotide sequence ID" value="NC_000909.1"/>
</dbReference>
<dbReference type="SMR" id="Q57647"/>
<dbReference type="STRING" id="243232.MJ_0188"/>
<dbReference type="PaxDb" id="243232-MJ_0188"/>
<dbReference type="EnsemblBacteria" id="AAB98168">
    <property type="protein sequence ID" value="AAB98168"/>
    <property type="gene ID" value="MJ_0188"/>
</dbReference>
<dbReference type="GeneID" id="1451035"/>
<dbReference type="KEGG" id="mja:MJ_0188"/>
<dbReference type="eggNOG" id="arCOG00623">
    <property type="taxonomic scope" value="Archaea"/>
</dbReference>
<dbReference type="HOGENOM" id="CLU_982154_0_0_2"/>
<dbReference type="InParanoid" id="Q57647"/>
<dbReference type="OrthoDB" id="89900at2157"/>
<dbReference type="PhylomeDB" id="Q57647"/>
<dbReference type="Proteomes" id="UP000000805">
    <property type="component" value="Chromosome"/>
</dbReference>
<dbReference type="CDD" id="cd04610">
    <property type="entry name" value="CBS_pair_ParBc_assoc"/>
    <property type="match status" value="1"/>
</dbReference>
<dbReference type="Gene3D" id="3.10.580.10">
    <property type="entry name" value="CBS-domain"/>
    <property type="match status" value="2"/>
</dbReference>
<dbReference type="Gene3D" id="3.90.1530.10">
    <property type="entry name" value="Conserved hypothetical protein from pyrococcus furiosus pfu- 392566-001, ParB domain"/>
    <property type="match status" value="1"/>
</dbReference>
<dbReference type="InterPro" id="IPR000644">
    <property type="entry name" value="CBS_dom"/>
</dbReference>
<dbReference type="InterPro" id="IPR046342">
    <property type="entry name" value="CBS_dom_sf"/>
</dbReference>
<dbReference type="InterPro" id="IPR051257">
    <property type="entry name" value="Diverse_CBS-Domain"/>
</dbReference>
<dbReference type="InterPro" id="IPR003115">
    <property type="entry name" value="ParB/Sulfiredoxin_dom"/>
</dbReference>
<dbReference type="InterPro" id="IPR036086">
    <property type="entry name" value="ParB/Sulfiredoxin_sf"/>
</dbReference>
<dbReference type="InterPro" id="IPR016427">
    <property type="entry name" value="UCP004699_CBS/ParB"/>
</dbReference>
<dbReference type="PANTHER" id="PTHR43080:SF2">
    <property type="entry name" value="CBS DOMAIN-CONTAINING PROTEIN"/>
    <property type="match status" value="1"/>
</dbReference>
<dbReference type="PANTHER" id="PTHR43080">
    <property type="entry name" value="CBS DOMAIN-CONTAINING PROTEIN CBSX3, MITOCHONDRIAL"/>
    <property type="match status" value="1"/>
</dbReference>
<dbReference type="Pfam" id="PF00571">
    <property type="entry name" value="CBS"/>
    <property type="match status" value="2"/>
</dbReference>
<dbReference type="Pfam" id="PF02195">
    <property type="entry name" value="ParBc"/>
    <property type="match status" value="1"/>
</dbReference>
<dbReference type="PIRSF" id="PIRSF004699">
    <property type="entry name" value="UCP004699_CBS_ParB"/>
    <property type="match status" value="1"/>
</dbReference>
<dbReference type="SMART" id="SM00116">
    <property type="entry name" value="CBS"/>
    <property type="match status" value="2"/>
</dbReference>
<dbReference type="SMART" id="SM00470">
    <property type="entry name" value="ParB"/>
    <property type="match status" value="1"/>
</dbReference>
<dbReference type="SUPFAM" id="SSF54631">
    <property type="entry name" value="CBS-domain pair"/>
    <property type="match status" value="1"/>
</dbReference>
<dbReference type="SUPFAM" id="SSF110849">
    <property type="entry name" value="ParB/Sulfiredoxin"/>
    <property type="match status" value="1"/>
</dbReference>
<dbReference type="PROSITE" id="PS51371">
    <property type="entry name" value="CBS"/>
    <property type="match status" value="2"/>
</dbReference>
<sequence length="265" mass="29851">MSVKVSEYMTKKVVTVSKDNTVKDVIKLLKETGHNSFPVVENGKLIGIVSVHDIVGKDDNEKVENVMTKRKDMVVTTPDANIMDVGRIMFRTGFSKLPVVDEENNLVGIISNMDVIRSQIEKTTPKKLENIIKTYKSLGYNLRVEKEEVDVNKLRPTQNKIHADELVGRMYELKKGLAEPIIAIKTKRGDYYILVDGHHRAVAAYKMGVPKLDAYVIYLDTDKKLGIEKTAEIMNLKSLEDVKIVDSDDENSVKVIKYNKNGVLG</sequence>
<keyword id="KW-0129">CBS domain</keyword>
<keyword id="KW-1185">Reference proteome</keyword>
<keyword id="KW-0677">Repeat</keyword>
<evidence type="ECO:0000255" key="1">
    <source>
        <dbReference type="PROSITE-ProRule" id="PRU00703"/>
    </source>
</evidence>
<name>Y188_METJA</name>
<reference key="1">
    <citation type="journal article" date="1996" name="Science">
        <title>Complete genome sequence of the methanogenic archaeon, Methanococcus jannaschii.</title>
        <authorList>
            <person name="Bult C.J."/>
            <person name="White O."/>
            <person name="Olsen G.J."/>
            <person name="Zhou L."/>
            <person name="Fleischmann R.D."/>
            <person name="Sutton G.G."/>
            <person name="Blake J.A."/>
            <person name="FitzGerald L.M."/>
            <person name="Clayton R.A."/>
            <person name="Gocayne J.D."/>
            <person name="Kerlavage A.R."/>
            <person name="Dougherty B.A."/>
            <person name="Tomb J.-F."/>
            <person name="Adams M.D."/>
            <person name="Reich C.I."/>
            <person name="Overbeek R."/>
            <person name="Kirkness E.F."/>
            <person name="Weinstock K.G."/>
            <person name="Merrick J.M."/>
            <person name="Glodek A."/>
            <person name="Scott J.L."/>
            <person name="Geoghagen N.S.M."/>
            <person name="Weidman J.F."/>
            <person name="Fuhrmann J.L."/>
            <person name="Nguyen D."/>
            <person name="Utterback T.R."/>
            <person name="Kelley J.M."/>
            <person name="Peterson J.D."/>
            <person name="Sadow P.W."/>
            <person name="Hanna M.C."/>
            <person name="Cotton M.D."/>
            <person name="Roberts K.M."/>
            <person name="Hurst M.A."/>
            <person name="Kaine B.P."/>
            <person name="Borodovsky M."/>
            <person name="Klenk H.-P."/>
            <person name="Fraser C.M."/>
            <person name="Smith H.O."/>
            <person name="Woese C.R."/>
            <person name="Venter J.C."/>
        </authorList>
    </citation>
    <scope>NUCLEOTIDE SEQUENCE [LARGE SCALE GENOMIC DNA]</scope>
    <source>
        <strain>ATCC 43067 / DSM 2661 / JAL-1 / JCM 10045 / NBRC 100440</strain>
    </source>
</reference>
<protein>
    <recommendedName>
        <fullName>Uncharacterized protein MJ0188</fullName>
    </recommendedName>
</protein>
<gene>
    <name type="ordered locus">MJ0188</name>
</gene>
<accession>Q57647</accession>
<proteinExistence type="predicted"/>
<feature type="chain" id="PRO_0000106736" description="Uncharacterized protein MJ0188">
    <location>
        <begin position="1"/>
        <end position="265"/>
    </location>
</feature>
<feature type="domain" description="CBS 1" evidence="1">
    <location>
        <begin position="9"/>
        <end position="64"/>
    </location>
</feature>
<feature type="domain" description="CBS 2" evidence="1">
    <location>
        <begin position="67"/>
        <end position="126"/>
    </location>
</feature>
<organism>
    <name type="scientific">Methanocaldococcus jannaschii (strain ATCC 43067 / DSM 2661 / JAL-1 / JCM 10045 / NBRC 100440)</name>
    <name type="common">Methanococcus jannaschii</name>
    <dbReference type="NCBI Taxonomy" id="243232"/>
    <lineage>
        <taxon>Archaea</taxon>
        <taxon>Methanobacteriati</taxon>
        <taxon>Methanobacteriota</taxon>
        <taxon>Methanomada group</taxon>
        <taxon>Methanococci</taxon>
        <taxon>Methanococcales</taxon>
        <taxon>Methanocaldococcaceae</taxon>
        <taxon>Methanocaldococcus</taxon>
    </lineage>
</organism>